<accession>Q83IM2</accession>
<name>OTC_SHIFL</name>
<gene>
    <name type="primary">argI</name>
    <name type="ordered locus">SF4235</name>
    <name type="ordered locus">S4496</name>
</gene>
<sequence>MSGFYHKHFLKLLDFTPAELNSLLQLAAKLKADKKSGKEEAKLTGKNIALIFEKDSTRTRCSFEVAAYDQGARVTYLGPSGSQIGHKESIKDTARVLGRMYDGIQYRGYGQEIVETLAEYAGVPVWNGLTNEFHPTQLLADLLTMQEHLPGKAFNEMTLVYAGDARNNMGNSMLEAAALTGLDLRLVAPQACWPEAALVTECRALAQQNGGNITLTEDVAKGVEGADFIYTDVWVSMGEAKEKWAERIALLRDYQVNSKMMQLTGNPEVKFLHCLPAFHDDQTTLGKKMAEEFGLHGGMEVTDEVFESAASIVFDQAENRMHTIKAVMVATLSKLNN</sequence>
<keyword id="KW-0028">Amino-acid biosynthesis</keyword>
<keyword id="KW-0055">Arginine biosynthesis</keyword>
<keyword id="KW-0963">Cytoplasm</keyword>
<keyword id="KW-1185">Reference proteome</keyword>
<keyword id="KW-0808">Transferase</keyword>
<protein>
    <recommendedName>
        <fullName>Ornithine carbamoyltransferase</fullName>
        <shortName>OTCase</shortName>
        <ecNumber>2.1.3.3</ecNumber>
    </recommendedName>
</protein>
<dbReference type="EC" id="2.1.3.3"/>
<dbReference type="EMBL" id="AE005674">
    <property type="protein sequence ID" value="AAN45654.1"/>
    <property type="molecule type" value="Genomic_DNA"/>
</dbReference>
<dbReference type="EMBL" id="AE014073">
    <property type="protein sequence ID" value="AAP19441.1"/>
    <property type="molecule type" value="Genomic_DNA"/>
</dbReference>
<dbReference type="RefSeq" id="NP_709947.1">
    <property type="nucleotide sequence ID" value="NC_004337.2"/>
</dbReference>
<dbReference type="SMR" id="Q83IM2"/>
<dbReference type="STRING" id="198214.SF4235"/>
<dbReference type="PaxDb" id="198214-SF4235"/>
<dbReference type="GeneID" id="1027785"/>
<dbReference type="KEGG" id="sfl:SF4235"/>
<dbReference type="KEGG" id="sfx:S4496"/>
<dbReference type="PATRIC" id="fig|198214.7.peg.4995"/>
<dbReference type="HOGENOM" id="CLU_043846_3_1_6"/>
<dbReference type="UniPathway" id="UPA00068">
    <property type="reaction ID" value="UER00112"/>
</dbReference>
<dbReference type="Proteomes" id="UP000001006">
    <property type="component" value="Chromosome"/>
</dbReference>
<dbReference type="Proteomes" id="UP000002673">
    <property type="component" value="Chromosome"/>
</dbReference>
<dbReference type="GO" id="GO:0005737">
    <property type="term" value="C:cytoplasm"/>
    <property type="evidence" value="ECO:0007669"/>
    <property type="project" value="UniProtKB-SubCell"/>
</dbReference>
<dbReference type="GO" id="GO:0016597">
    <property type="term" value="F:amino acid binding"/>
    <property type="evidence" value="ECO:0007669"/>
    <property type="project" value="InterPro"/>
</dbReference>
<dbReference type="GO" id="GO:0004585">
    <property type="term" value="F:ornithine carbamoyltransferase activity"/>
    <property type="evidence" value="ECO:0007669"/>
    <property type="project" value="UniProtKB-UniRule"/>
</dbReference>
<dbReference type="GO" id="GO:0042450">
    <property type="term" value="P:arginine biosynthetic process via ornithine"/>
    <property type="evidence" value="ECO:0007669"/>
    <property type="project" value="TreeGrafter"/>
</dbReference>
<dbReference type="GO" id="GO:0019240">
    <property type="term" value="P:citrulline biosynthetic process"/>
    <property type="evidence" value="ECO:0007669"/>
    <property type="project" value="TreeGrafter"/>
</dbReference>
<dbReference type="GO" id="GO:0006526">
    <property type="term" value="P:L-arginine biosynthetic process"/>
    <property type="evidence" value="ECO:0007669"/>
    <property type="project" value="UniProtKB-UniRule"/>
</dbReference>
<dbReference type="FunFam" id="3.40.50.1370:FF:000003">
    <property type="entry name" value="Ornithine carbamoyltransferase"/>
    <property type="match status" value="1"/>
</dbReference>
<dbReference type="FunFam" id="3.40.50.1370:FF:000004">
    <property type="entry name" value="Ornithine carbamoyltransferase"/>
    <property type="match status" value="1"/>
</dbReference>
<dbReference type="Gene3D" id="3.40.50.1370">
    <property type="entry name" value="Aspartate/ornithine carbamoyltransferase"/>
    <property type="match status" value="2"/>
</dbReference>
<dbReference type="HAMAP" id="MF_01109">
    <property type="entry name" value="OTCase"/>
    <property type="match status" value="1"/>
</dbReference>
<dbReference type="InterPro" id="IPR006132">
    <property type="entry name" value="Asp/Orn_carbamoyltranf_P-bd"/>
</dbReference>
<dbReference type="InterPro" id="IPR006130">
    <property type="entry name" value="Asp/Orn_carbamoylTrfase"/>
</dbReference>
<dbReference type="InterPro" id="IPR036901">
    <property type="entry name" value="Asp/Orn_carbamoylTrfase_sf"/>
</dbReference>
<dbReference type="InterPro" id="IPR006131">
    <property type="entry name" value="Asp_carbamoyltransf_Asp/Orn-bd"/>
</dbReference>
<dbReference type="InterPro" id="IPR002292">
    <property type="entry name" value="Orn/put_carbamltrans"/>
</dbReference>
<dbReference type="InterPro" id="IPR024904">
    <property type="entry name" value="OTCase_ArgI"/>
</dbReference>
<dbReference type="NCBIfam" id="TIGR00658">
    <property type="entry name" value="orni_carb_tr"/>
    <property type="match status" value="1"/>
</dbReference>
<dbReference type="NCBIfam" id="NF003286">
    <property type="entry name" value="PRK04284.1"/>
    <property type="match status" value="1"/>
</dbReference>
<dbReference type="NCBIfam" id="NF009213">
    <property type="entry name" value="PRK12562.1"/>
    <property type="match status" value="1"/>
</dbReference>
<dbReference type="PANTHER" id="PTHR45753:SF4">
    <property type="entry name" value="ORNITHINE CARBAMOYLTRANSFERASE SUBUNIT F-RELATED"/>
    <property type="match status" value="1"/>
</dbReference>
<dbReference type="PANTHER" id="PTHR45753">
    <property type="entry name" value="ORNITHINE CARBAMOYLTRANSFERASE, MITOCHONDRIAL"/>
    <property type="match status" value="1"/>
</dbReference>
<dbReference type="Pfam" id="PF00185">
    <property type="entry name" value="OTCace"/>
    <property type="match status" value="1"/>
</dbReference>
<dbReference type="Pfam" id="PF02729">
    <property type="entry name" value="OTCace_N"/>
    <property type="match status" value="1"/>
</dbReference>
<dbReference type="PRINTS" id="PR00100">
    <property type="entry name" value="AOTCASE"/>
</dbReference>
<dbReference type="PRINTS" id="PR00102">
    <property type="entry name" value="OTCASE"/>
</dbReference>
<dbReference type="SUPFAM" id="SSF53671">
    <property type="entry name" value="Aspartate/ornithine carbamoyltransferase"/>
    <property type="match status" value="1"/>
</dbReference>
<dbReference type="PROSITE" id="PS00097">
    <property type="entry name" value="CARBAMOYLTRANSFERASE"/>
    <property type="match status" value="1"/>
</dbReference>
<comment type="function">
    <text evidence="1">Reversibly catalyzes the transfer of the carbamoyl group from carbamoyl phosphate (CP) to the N(epsilon) atom of ornithine (ORN) to produce L-citrulline.</text>
</comment>
<comment type="catalytic activity">
    <reaction>
        <text>carbamoyl phosphate + L-ornithine = L-citrulline + phosphate + H(+)</text>
        <dbReference type="Rhea" id="RHEA:19513"/>
        <dbReference type="ChEBI" id="CHEBI:15378"/>
        <dbReference type="ChEBI" id="CHEBI:43474"/>
        <dbReference type="ChEBI" id="CHEBI:46911"/>
        <dbReference type="ChEBI" id="CHEBI:57743"/>
        <dbReference type="ChEBI" id="CHEBI:58228"/>
        <dbReference type="EC" id="2.1.3.3"/>
    </reaction>
</comment>
<comment type="pathway">
    <text>Amino-acid biosynthesis; L-arginine biosynthesis; L-arginine from L-ornithine and carbamoyl phosphate: step 1/3.</text>
</comment>
<comment type="subcellular location">
    <subcellularLocation>
        <location evidence="1">Cytoplasm</location>
    </subcellularLocation>
</comment>
<comment type="similarity">
    <text evidence="3">Belongs to the aspartate/ornithine carbamoyltransferase superfamily. OTCase family.</text>
</comment>
<organism>
    <name type="scientific">Shigella flexneri</name>
    <dbReference type="NCBI Taxonomy" id="623"/>
    <lineage>
        <taxon>Bacteria</taxon>
        <taxon>Pseudomonadati</taxon>
        <taxon>Pseudomonadota</taxon>
        <taxon>Gammaproteobacteria</taxon>
        <taxon>Enterobacterales</taxon>
        <taxon>Enterobacteriaceae</taxon>
        <taxon>Shigella</taxon>
    </lineage>
</organism>
<proteinExistence type="inferred from homology"/>
<feature type="chain" id="PRO_0000113007" description="Ornithine carbamoyltransferase">
    <location>
        <begin position="1"/>
        <end position="337"/>
    </location>
</feature>
<feature type="binding site" evidence="2">
    <location>
        <begin position="56"/>
        <end position="59"/>
    </location>
    <ligand>
        <name>carbamoyl phosphate</name>
        <dbReference type="ChEBI" id="CHEBI:58228"/>
    </ligand>
</feature>
<feature type="binding site" evidence="2">
    <location>
        <position position="83"/>
    </location>
    <ligand>
        <name>carbamoyl phosphate</name>
        <dbReference type="ChEBI" id="CHEBI:58228"/>
    </ligand>
</feature>
<feature type="binding site" evidence="2">
    <location>
        <position position="107"/>
    </location>
    <ligand>
        <name>carbamoyl phosphate</name>
        <dbReference type="ChEBI" id="CHEBI:58228"/>
    </ligand>
</feature>
<feature type="binding site" evidence="2">
    <location>
        <begin position="134"/>
        <end position="137"/>
    </location>
    <ligand>
        <name>carbamoyl phosphate</name>
        <dbReference type="ChEBI" id="CHEBI:58228"/>
    </ligand>
</feature>
<feature type="binding site" evidence="2">
    <location>
        <position position="168"/>
    </location>
    <ligand>
        <name>L-ornithine</name>
        <dbReference type="ChEBI" id="CHEBI:46911"/>
    </ligand>
</feature>
<feature type="binding site" evidence="2">
    <location>
        <position position="232"/>
    </location>
    <ligand>
        <name>L-ornithine</name>
        <dbReference type="ChEBI" id="CHEBI:46911"/>
    </ligand>
</feature>
<feature type="binding site" evidence="2">
    <location>
        <begin position="236"/>
        <end position="237"/>
    </location>
    <ligand>
        <name>L-ornithine</name>
        <dbReference type="ChEBI" id="CHEBI:46911"/>
    </ligand>
</feature>
<feature type="binding site" evidence="2">
    <location>
        <begin position="274"/>
        <end position="275"/>
    </location>
    <ligand>
        <name>carbamoyl phosphate</name>
        <dbReference type="ChEBI" id="CHEBI:58228"/>
    </ligand>
</feature>
<feature type="binding site" evidence="2">
    <location>
        <position position="320"/>
    </location>
    <ligand>
        <name>carbamoyl phosphate</name>
        <dbReference type="ChEBI" id="CHEBI:58228"/>
    </ligand>
</feature>
<reference key="1">
    <citation type="journal article" date="2002" name="Nucleic Acids Res.">
        <title>Genome sequence of Shigella flexneri 2a: insights into pathogenicity through comparison with genomes of Escherichia coli K12 and O157.</title>
        <authorList>
            <person name="Jin Q."/>
            <person name="Yuan Z."/>
            <person name="Xu J."/>
            <person name="Wang Y."/>
            <person name="Shen Y."/>
            <person name="Lu W."/>
            <person name="Wang J."/>
            <person name="Liu H."/>
            <person name="Yang J."/>
            <person name="Yang F."/>
            <person name="Zhang X."/>
            <person name="Zhang J."/>
            <person name="Yang G."/>
            <person name="Wu H."/>
            <person name="Qu D."/>
            <person name="Dong J."/>
            <person name="Sun L."/>
            <person name="Xue Y."/>
            <person name="Zhao A."/>
            <person name="Gao Y."/>
            <person name="Zhu J."/>
            <person name="Kan B."/>
            <person name="Ding K."/>
            <person name="Chen S."/>
            <person name="Cheng H."/>
            <person name="Yao Z."/>
            <person name="He B."/>
            <person name="Chen R."/>
            <person name="Ma D."/>
            <person name="Qiang B."/>
            <person name="Wen Y."/>
            <person name="Hou Y."/>
            <person name="Yu J."/>
        </authorList>
    </citation>
    <scope>NUCLEOTIDE SEQUENCE [LARGE SCALE GENOMIC DNA]</scope>
    <source>
        <strain>301 / Serotype 2a</strain>
    </source>
</reference>
<reference key="2">
    <citation type="journal article" date="2003" name="Infect. Immun.">
        <title>Complete genome sequence and comparative genomics of Shigella flexneri serotype 2a strain 2457T.</title>
        <authorList>
            <person name="Wei J."/>
            <person name="Goldberg M.B."/>
            <person name="Burland V."/>
            <person name="Venkatesan M.M."/>
            <person name="Deng W."/>
            <person name="Fournier G."/>
            <person name="Mayhew G.F."/>
            <person name="Plunkett G. III"/>
            <person name="Rose D.J."/>
            <person name="Darling A."/>
            <person name="Mau B."/>
            <person name="Perna N.T."/>
            <person name="Payne S.M."/>
            <person name="Runyen-Janecky L.J."/>
            <person name="Zhou S."/>
            <person name="Schwartz D.C."/>
            <person name="Blattner F.R."/>
        </authorList>
    </citation>
    <scope>NUCLEOTIDE SEQUENCE [LARGE SCALE GENOMIC DNA]</scope>
    <source>
        <strain>ATCC 700930 / 2457T / Serotype 2a</strain>
    </source>
</reference>
<evidence type="ECO:0000250" key="1"/>
<evidence type="ECO:0000255" key="2">
    <source>
        <dbReference type="HAMAP-Rule" id="MF_01109"/>
    </source>
</evidence>
<evidence type="ECO:0000305" key="3"/>